<feature type="chain" id="PRO_0000079180" description="Putative sporulation sigma factor-processing peptidase">
    <location>
        <begin position="1" status="less than"/>
        <end position="161"/>
    </location>
</feature>
<feature type="active site" evidence="1">
    <location>
        <position position="38"/>
    </location>
</feature>
<feature type="non-terminal residue">
    <location>
        <position position="1"/>
    </location>
</feature>
<comment type="function">
    <text>Probably activates the RNA polymerase sigma-35 factor at the stage II of sporulation.</text>
</comment>
<comment type="similarity">
    <text evidence="2">Belongs to the peptidase U4 family.</text>
</comment>
<name>SP2G_BACTK</name>
<dbReference type="EC" id="3.4.23.-"/>
<dbReference type="EMBL" id="X56697">
    <property type="protein sequence ID" value="CAA40025.1"/>
    <property type="molecule type" value="Genomic_DNA"/>
</dbReference>
<dbReference type="PIR" id="D39441">
    <property type="entry name" value="D39441"/>
</dbReference>
<dbReference type="GO" id="GO:0004190">
    <property type="term" value="F:aspartic-type endopeptidase activity"/>
    <property type="evidence" value="ECO:0007669"/>
    <property type="project" value="UniProtKB-KW"/>
</dbReference>
<dbReference type="GO" id="GO:0030436">
    <property type="term" value="P:asexual sporulation"/>
    <property type="evidence" value="ECO:0007669"/>
    <property type="project" value="InterPro"/>
</dbReference>
<dbReference type="GO" id="GO:0006508">
    <property type="term" value="P:proteolysis"/>
    <property type="evidence" value="ECO:0007669"/>
    <property type="project" value="UniProtKB-KW"/>
</dbReference>
<dbReference type="GO" id="GO:0030435">
    <property type="term" value="P:sporulation resulting in formation of a cellular spore"/>
    <property type="evidence" value="ECO:0007669"/>
    <property type="project" value="UniProtKB-KW"/>
</dbReference>
<dbReference type="InterPro" id="IPR005081">
    <property type="entry name" value="SpoIIGA"/>
</dbReference>
<dbReference type="Pfam" id="PF03419">
    <property type="entry name" value="Peptidase_U4"/>
    <property type="match status" value="1"/>
</dbReference>
<accession>P26767</accession>
<organism>
    <name type="scientific">Bacillus thuringiensis subsp. kurstaki</name>
    <dbReference type="NCBI Taxonomy" id="29339"/>
    <lineage>
        <taxon>Bacteria</taxon>
        <taxon>Bacillati</taxon>
        <taxon>Bacillota</taxon>
        <taxon>Bacilli</taxon>
        <taxon>Bacillales</taxon>
        <taxon>Bacillaceae</taxon>
        <taxon>Bacillus</taxon>
        <taxon>Bacillus cereus group</taxon>
    </lineage>
</organism>
<protein>
    <recommendedName>
        <fullName>Putative sporulation sigma factor-processing peptidase</fullName>
        <ecNumber>3.4.23.-</ecNumber>
    </recommendedName>
</protein>
<evidence type="ECO:0000250" key="1"/>
<evidence type="ECO:0000305" key="2"/>
<proteinExistence type="inferred from homology"/>
<reference key="1">
    <citation type="journal article" date="1991" name="J. Bacteriol.">
        <title>Molecular cloning and characterization of two genes encoding sigma factors that direct transcription from a Bacillus thuringiensis crystal protein gene promoter.</title>
        <authorList>
            <person name="Adams L.F."/>
            <person name="Brown K.L."/>
            <person name="Whiteley H.R."/>
        </authorList>
    </citation>
    <scope>NUCLEOTIDE SEQUENCE [GENOMIC DNA]</scope>
    <source>
        <strain>HD-1</strain>
    </source>
</reference>
<keyword id="KW-0064">Aspartyl protease</keyword>
<keyword id="KW-0378">Hydrolase</keyword>
<keyword id="KW-0645">Protease</keyword>
<keyword id="KW-0749">Sporulation</keyword>
<sequence length="161" mass="18182">FSKKRIESVEVTKIHYDQIVKVKIQLAEEELELAGLIDSGNQLYDPLTKTPVMIMHVSSLEHCLPSWLTEQIYSKTEIPQIPENDSGWATKLRLIPFRAVGVESQFLWAIKPDSVQVDHEGSSIVVNKVLIGLNTQQLSTNGEYQCIVHPKMLISQKMVIA</sequence>